<name>METB_HELPX</name>
<protein>
    <recommendedName>
        <fullName>Cystathionine gamma-synthase</fullName>
        <shortName>CGS</shortName>
        <ecNumber>2.5.1.48</ecNumber>
    </recommendedName>
    <alternativeName>
        <fullName>O-succinylhomoserine (thiol)-lyase</fullName>
    </alternativeName>
</protein>
<evidence type="ECO:0000250" key="1"/>
<evidence type="ECO:0000269" key="2">
    <source>
    </source>
</evidence>
<evidence type="ECO:0000305" key="3"/>
<accession>Q1M0P5</accession>
<comment type="function">
    <text evidence="1 2">Catalyzes the formation of L-cystathionine from O-succinyl-L-homoserine (OSHS) and L-cysteine, via a gamma-replacement reaction (By similarity). In the absence of thiol, catalyzes gamma-elimination to form 2-oxobutanoate, succinate and ammonia.</text>
</comment>
<comment type="catalytic activity">
    <reaction>
        <text>O-succinyl-L-homoserine + L-cysteine = L,L-cystathionine + succinate + H(+)</text>
        <dbReference type="Rhea" id="RHEA:20397"/>
        <dbReference type="ChEBI" id="CHEBI:15378"/>
        <dbReference type="ChEBI" id="CHEBI:30031"/>
        <dbReference type="ChEBI" id="CHEBI:35235"/>
        <dbReference type="ChEBI" id="CHEBI:57661"/>
        <dbReference type="ChEBI" id="CHEBI:58161"/>
        <dbReference type="EC" id="2.5.1.48"/>
    </reaction>
</comment>
<comment type="cofactor">
    <cofactor evidence="1">
        <name>pyridoxal 5'-phosphate</name>
        <dbReference type="ChEBI" id="CHEBI:597326"/>
    </cofactor>
    <text evidence="1">Binds 1 pyridoxal phosphate per subunit.</text>
</comment>
<comment type="activity regulation">
    <text evidence="2">Four natural products, alpha-lapachone, 9-hydroxy-alpha-lapachone, Paulownin, and Yangambin, show strong inhibitory activities against CGS. All these four inhibitors prevent the binding of OSHS to CGS in a non-competitive fashion. These compounds are specific inhibitors against CGS from H.pylori relative to E.coli since they exhibit very low inhibition activities against CGS from E.coli.</text>
</comment>
<comment type="biophysicochemical properties">
    <kinetics>
        <KM evidence="2">3.02 mM for O-succinyl-L-homoserine (at pH 7.5 and 25 degrees Celsius)</KM>
        <text>The KM value was measured when assaying the gamma-elimination reaction.</text>
    </kinetics>
    <phDependence>
        <text evidence="2">Optimum pH is 7.5.</text>
    </phDependence>
    <temperatureDependence>
        <text evidence="2">Optimum temperature is 45 degrees Celsius.</text>
    </temperatureDependence>
</comment>
<comment type="pathway">
    <text>Amino-acid biosynthesis; L-methionine biosynthesis via de novo pathway; L-cystathionine from O-succinyl-L-homoserine: step 1/1.</text>
</comment>
<comment type="subunit">
    <text evidence="1">Homotetramer.</text>
</comment>
<comment type="subcellular location">
    <subcellularLocation>
        <location evidence="1">Cytoplasm</location>
    </subcellularLocation>
</comment>
<comment type="biotechnology">
    <text evidence="2">CGS from H.pylori is an attractive target for antibiotics discovery since the four natural inhibitors alpha-lapachone, 9-hydroxy-alpha-lapachone, Paulownin, and Yangambin also display strong antibacterial activity in vitro, highly inhibiting the growth of H.pylori, whereas no antibacterial activity against E.coli in vitro. These inhibitors might thus be used as potential lead compounds for further research in the discovery of anti-H.pylori agents.</text>
</comment>
<comment type="similarity">
    <text evidence="3">Belongs to the trans-sulfuration enzymes family.</text>
</comment>
<feature type="chain" id="PRO_0000416405" description="Cystathionine gamma-synthase">
    <location>
        <begin position="1"/>
        <end position="380"/>
    </location>
</feature>
<feature type="modified residue" description="N6-(pyridoxal phosphate)lysine" evidence="1">
    <location>
        <position position="195"/>
    </location>
</feature>
<dbReference type="EC" id="2.5.1.48"/>
<dbReference type="EMBL" id="AY904357">
    <property type="protein sequence ID" value="AAX99219.1"/>
    <property type="molecule type" value="Genomic_DNA"/>
</dbReference>
<dbReference type="RefSeq" id="WP_077231658.1">
    <property type="nucleotide sequence ID" value="NZ_CP109885.1"/>
</dbReference>
<dbReference type="SMR" id="Q1M0P5"/>
<dbReference type="eggNOG" id="COG0626">
    <property type="taxonomic scope" value="Bacteria"/>
</dbReference>
<dbReference type="BRENDA" id="2.5.1.48">
    <property type="organism ID" value="2604"/>
</dbReference>
<dbReference type="SABIO-RK" id="Q1M0P5"/>
<dbReference type="UniPathway" id="UPA00051">
    <property type="reaction ID" value="UER00077"/>
</dbReference>
<dbReference type="GO" id="GO:0005737">
    <property type="term" value="C:cytoplasm"/>
    <property type="evidence" value="ECO:0007669"/>
    <property type="project" value="UniProtKB-SubCell"/>
</dbReference>
<dbReference type="GO" id="GO:0004123">
    <property type="term" value="F:cystathionine gamma-lyase activity"/>
    <property type="evidence" value="ECO:0007669"/>
    <property type="project" value="TreeGrafter"/>
</dbReference>
<dbReference type="GO" id="GO:0003962">
    <property type="term" value="F:cystathionine gamma-synthase activity"/>
    <property type="evidence" value="ECO:0007669"/>
    <property type="project" value="UniProtKB-EC"/>
</dbReference>
<dbReference type="GO" id="GO:0030170">
    <property type="term" value="F:pyridoxal phosphate binding"/>
    <property type="evidence" value="ECO:0007669"/>
    <property type="project" value="InterPro"/>
</dbReference>
<dbReference type="GO" id="GO:0019343">
    <property type="term" value="P:cysteine biosynthetic process via cystathionine"/>
    <property type="evidence" value="ECO:0007669"/>
    <property type="project" value="TreeGrafter"/>
</dbReference>
<dbReference type="GO" id="GO:0009086">
    <property type="term" value="P:methionine biosynthetic process"/>
    <property type="evidence" value="ECO:0007669"/>
    <property type="project" value="UniProtKB-KW"/>
</dbReference>
<dbReference type="GO" id="GO:0019346">
    <property type="term" value="P:transsulfuration"/>
    <property type="evidence" value="ECO:0007669"/>
    <property type="project" value="InterPro"/>
</dbReference>
<dbReference type="CDD" id="cd00614">
    <property type="entry name" value="CGS_like"/>
    <property type="match status" value="1"/>
</dbReference>
<dbReference type="FunFam" id="3.90.1150.10:FF:000008">
    <property type="entry name" value="Cystathionine gamma-synthase"/>
    <property type="match status" value="1"/>
</dbReference>
<dbReference type="FunFam" id="3.40.640.10:FF:000009">
    <property type="entry name" value="Cystathionine gamma-synthase homolog"/>
    <property type="match status" value="1"/>
</dbReference>
<dbReference type="Gene3D" id="3.90.1150.10">
    <property type="entry name" value="Aspartate Aminotransferase, domain 1"/>
    <property type="match status" value="1"/>
</dbReference>
<dbReference type="Gene3D" id="3.40.640.10">
    <property type="entry name" value="Type I PLP-dependent aspartate aminotransferase-like (Major domain)"/>
    <property type="match status" value="1"/>
</dbReference>
<dbReference type="InterPro" id="IPR000277">
    <property type="entry name" value="Cys/Met-Metab_PyrdxlP-dep_enz"/>
</dbReference>
<dbReference type="InterPro" id="IPR054542">
    <property type="entry name" value="Cys_met_metab_PP"/>
</dbReference>
<dbReference type="InterPro" id="IPR015424">
    <property type="entry name" value="PyrdxlP-dep_Trfase"/>
</dbReference>
<dbReference type="InterPro" id="IPR015421">
    <property type="entry name" value="PyrdxlP-dep_Trfase_major"/>
</dbReference>
<dbReference type="InterPro" id="IPR015422">
    <property type="entry name" value="PyrdxlP-dep_Trfase_small"/>
</dbReference>
<dbReference type="NCBIfam" id="NF004821">
    <property type="entry name" value="PRK06176.1"/>
    <property type="match status" value="1"/>
</dbReference>
<dbReference type="NCBIfam" id="NF005810">
    <property type="entry name" value="PRK07671.1"/>
    <property type="match status" value="1"/>
</dbReference>
<dbReference type="PANTHER" id="PTHR11808:SF15">
    <property type="entry name" value="CYSTATHIONINE GAMMA-LYASE"/>
    <property type="match status" value="1"/>
</dbReference>
<dbReference type="PANTHER" id="PTHR11808">
    <property type="entry name" value="TRANS-SULFURATION ENZYME FAMILY MEMBER"/>
    <property type="match status" value="1"/>
</dbReference>
<dbReference type="Pfam" id="PF01053">
    <property type="entry name" value="Cys_Met_Meta_PP"/>
    <property type="match status" value="1"/>
</dbReference>
<dbReference type="PIRSF" id="PIRSF001434">
    <property type="entry name" value="CGS"/>
    <property type="match status" value="1"/>
</dbReference>
<dbReference type="SUPFAM" id="SSF53383">
    <property type="entry name" value="PLP-dependent transferases"/>
    <property type="match status" value="1"/>
</dbReference>
<dbReference type="PROSITE" id="PS00868">
    <property type="entry name" value="CYS_MET_METAB_PP"/>
    <property type="match status" value="1"/>
</dbReference>
<proteinExistence type="evidence at protein level"/>
<organism>
    <name type="scientific">Helicobacter pylori</name>
    <name type="common">Campylobacter pylori</name>
    <dbReference type="NCBI Taxonomy" id="210"/>
    <lineage>
        <taxon>Bacteria</taxon>
        <taxon>Pseudomonadati</taxon>
        <taxon>Campylobacterota</taxon>
        <taxon>Epsilonproteobacteria</taxon>
        <taxon>Campylobacterales</taxon>
        <taxon>Helicobacteraceae</taxon>
        <taxon>Helicobacter</taxon>
    </lineage>
</organism>
<gene>
    <name type="primary">metB</name>
</gene>
<keyword id="KW-0028">Amino-acid biosynthesis</keyword>
<keyword id="KW-0963">Cytoplasm</keyword>
<keyword id="KW-0486">Methionine biosynthesis</keyword>
<keyword id="KW-0663">Pyridoxal phosphate</keyword>
<keyword id="KW-0808">Transferase</keyword>
<reference key="1">
    <citation type="journal article" date="2008" name="J. Biochem.">
        <title>Enzymatic characterization and inhibitor discovery of a new cystathionine gamma-synthase from Helicobacter pylori.</title>
        <authorList>
            <person name="Kong Y."/>
            <person name="Wu D."/>
            <person name="Bai H."/>
            <person name="Han C."/>
            <person name="Chen J."/>
            <person name="Chen L."/>
            <person name="Hu L."/>
            <person name="Jiang H."/>
            <person name="Shen X."/>
        </authorList>
    </citation>
    <scope>NUCLEOTIDE SEQUENCE [GENOMIC DNA]</scope>
    <scope>FUNCTION</scope>
    <scope>BIOPHYSICOCHEMICAL PROPERTIES</scope>
    <scope>ACTIVITY REGULATION</scope>
    <scope>BIOTECHNOLOGY</scope>
    <source>
        <strain>SS1</strain>
    </source>
</reference>
<sequence length="380" mass="41151">MHMQTKLIHGGISEDATTGAVSVPIYQTSTYRQDAIGHHKGYEYSRSGNPTRFALEELIADLEGGVKGFAFASGLAGIHAVFSLLQSGDHVLLGDDVYGGTFRLFNKVLVKNGLSCTIIDTSDLSQIKKAIKPNTKALYLETPSNPLLKITDLAQCASVAKDHGLLTIVDNTFATPYYQNPLLLGADIVVHSGTKYLGGHSDVVAGLVTTNNEALAQEIAFFQNAIGGVLGPQDSWLLQRGIKTLGLRMQAHQKNALCVAEFLEKHPKVERVYYPGLPTHPNYELAKKQMRGFSGMLSFTLKNDSEATPFVESLKLFILGESLGGVESLVGVPAFMTHACIPKTQREAAGIRDGLVRLSVGIEHEQDLLEDLEQAFAKIS</sequence>